<reference key="1">
    <citation type="journal article" date="2007" name="Genome Res.">
        <title>Genome characteristics of facultatively symbiotic Frankia sp. strains reflect host range and host plant biogeography.</title>
        <authorList>
            <person name="Normand P."/>
            <person name="Lapierre P."/>
            <person name="Tisa L.S."/>
            <person name="Gogarten J.P."/>
            <person name="Alloisio N."/>
            <person name="Bagnarol E."/>
            <person name="Bassi C.A."/>
            <person name="Berry A.M."/>
            <person name="Bickhart D.M."/>
            <person name="Choisne N."/>
            <person name="Couloux A."/>
            <person name="Cournoyer B."/>
            <person name="Cruveiller S."/>
            <person name="Daubin V."/>
            <person name="Demange N."/>
            <person name="Francino M.P."/>
            <person name="Goltsman E."/>
            <person name="Huang Y."/>
            <person name="Kopp O.R."/>
            <person name="Labarre L."/>
            <person name="Lapidus A."/>
            <person name="Lavire C."/>
            <person name="Marechal J."/>
            <person name="Martinez M."/>
            <person name="Mastronunzio J.E."/>
            <person name="Mullin B.C."/>
            <person name="Niemann J."/>
            <person name="Pujic P."/>
            <person name="Rawnsley T."/>
            <person name="Rouy Z."/>
            <person name="Schenowitz C."/>
            <person name="Sellstedt A."/>
            <person name="Tavares F."/>
            <person name="Tomkins J.P."/>
            <person name="Vallenet D."/>
            <person name="Valverde C."/>
            <person name="Wall L.G."/>
            <person name="Wang Y."/>
            <person name="Medigue C."/>
            <person name="Benson D.R."/>
        </authorList>
    </citation>
    <scope>NUCLEOTIDE SEQUENCE [LARGE SCALE GENOMIC DNA]</scope>
    <source>
        <strain>EAN1pec</strain>
    </source>
</reference>
<sequence length="254" mass="26415">MSRAGLDKKPDQVAAMFDQVARRYDVTNAVLSAGLDRTWRTATARALALAPGLRVLDVAAGTATSSRAFAAAGADVVACDFSLGMLAQARRRLADAAARAGAGAGTGGAGTGGGRVLLAAGDGLRLPFADGSFDRVTISFGLRNVAEGDVCLAELLRVTRPGGVLAVCEFSRPVWRPVRTAYMEYLMRALPAVARAVSSSPDSYVYLAESIRAWPGQAALAETIRAAGWTRVGWRNLSGGIVAVHRAVRPGGDD</sequence>
<organism>
    <name type="scientific">Parafrankia sp. (strain EAN1pec)</name>
    <dbReference type="NCBI Taxonomy" id="298653"/>
    <lineage>
        <taxon>Bacteria</taxon>
        <taxon>Bacillati</taxon>
        <taxon>Actinomycetota</taxon>
        <taxon>Actinomycetes</taxon>
        <taxon>Frankiales</taxon>
        <taxon>Frankiaceae</taxon>
        <taxon>Parafrankia</taxon>
    </lineage>
</organism>
<accession>A8LCA4</accession>
<feature type="chain" id="PRO_1000187767" description="Demethylmenaquinone methyltransferase">
    <location>
        <begin position="1"/>
        <end position="254"/>
    </location>
</feature>
<feature type="binding site" evidence="1">
    <location>
        <position position="62"/>
    </location>
    <ligand>
        <name>S-adenosyl-L-methionine</name>
        <dbReference type="ChEBI" id="CHEBI:59789"/>
    </ligand>
</feature>
<feature type="binding site" evidence="1">
    <location>
        <position position="80"/>
    </location>
    <ligand>
        <name>S-adenosyl-L-methionine</name>
        <dbReference type="ChEBI" id="CHEBI:59789"/>
    </ligand>
</feature>
<feature type="binding site" evidence="1">
    <location>
        <begin position="122"/>
        <end position="123"/>
    </location>
    <ligand>
        <name>S-adenosyl-L-methionine</name>
        <dbReference type="ChEBI" id="CHEBI:59789"/>
    </ligand>
</feature>
<feature type="binding site" evidence="1">
    <location>
        <position position="139"/>
    </location>
    <ligand>
        <name>S-adenosyl-L-methionine</name>
        <dbReference type="ChEBI" id="CHEBI:59789"/>
    </ligand>
</feature>
<gene>
    <name evidence="1" type="primary">menG</name>
    <name type="ordered locus">Franean1_6097</name>
</gene>
<dbReference type="EC" id="2.1.1.163" evidence="1"/>
<dbReference type="EMBL" id="CP000820">
    <property type="protein sequence ID" value="ABW15441.1"/>
    <property type="molecule type" value="Genomic_DNA"/>
</dbReference>
<dbReference type="RefSeq" id="WP_020463522.1">
    <property type="nucleotide sequence ID" value="NC_009921.1"/>
</dbReference>
<dbReference type="SMR" id="A8LCA4"/>
<dbReference type="STRING" id="298653.Franean1_6097"/>
<dbReference type="KEGG" id="fre:Franean1_6097"/>
<dbReference type="eggNOG" id="COG2226">
    <property type="taxonomic scope" value="Bacteria"/>
</dbReference>
<dbReference type="HOGENOM" id="CLU_037990_0_0_11"/>
<dbReference type="UniPathway" id="UPA00079">
    <property type="reaction ID" value="UER00169"/>
</dbReference>
<dbReference type="GO" id="GO:0043770">
    <property type="term" value="F:demethylmenaquinone methyltransferase activity"/>
    <property type="evidence" value="ECO:0007669"/>
    <property type="project" value="UniProtKB-UniRule"/>
</dbReference>
<dbReference type="GO" id="GO:0009234">
    <property type="term" value="P:menaquinone biosynthetic process"/>
    <property type="evidence" value="ECO:0007669"/>
    <property type="project" value="UniProtKB-UniRule"/>
</dbReference>
<dbReference type="GO" id="GO:0032259">
    <property type="term" value="P:methylation"/>
    <property type="evidence" value="ECO:0007669"/>
    <property type="project" value="UniProtKB-KW"/>
</dbReference>
<dbReference type="CDD" id="cd02440">
    <property type="entry name" value="AdoMet_MTases"/>
    <property type="match status" value="1"/>
</dbReference>
<dbReference type="Gene3D" id="3.40.50.150">
    <property type="entry name" value="Vaccinia Virus protein VP39"/>
    <property type="match status" value="1"/>
</dbReference>
<dbReference type="HAMAP" id="MF_01813">
    <property type="entry name" value="MenG_UbiE_methyltr"/>
    <property type="match status" value="1"/>
</dbReference>
<dbReference type="InterPro" id="IPR029063">
    <property type="entry name" value="SAM-dependent_MTases_sf"/>
</dbReference>
<dbReference type="InterPro" id="IPR004033">
    <property type="entry name" value="UbiE/COQ5_MeTrFase"/>
</dbReference>
<dbReference type="InterPro" id="IPR023576">
    <property type="entry name" value="UbiE/COQ5_MeTrFase_CS"/>
</dbReference>
<dbReference type="NCBIfam" id="TIGR01934">
    <property type="entry name" value="MenG_MenH_UbiE"/>
    <property type="match status" value="1"/>
</dbReference>
<dbReference type="NCBIfam" id="NF001241">
    <property type="entry name" value="PRK00216.1-2"/>
    <property type="match status" value="1"/>
</dbReference>
<dbReference type="PANTHER" id="PTHR43591:SF24">
    <property type="entry name" value="2-METHOXY-6-POLYPRENYL-1,4-BENZOQUINOL METHYLASE, MITOCHONDRIAL"/>
    <property type="match status" value="1"/>
</dbReference>
<dbReference type="PANTHER" id="PTHR43591">
    <property type="entry name" value="METHYLTRANSFERASE"/>
    <property type="match status" value="1"/>
</dbReference>
<dbReference type="Pfam" id="PF01209">
    <property type="entry name" value="Ubie_methyltran"/>
    <property type="match status" value="1"/>
</dbReference>
<dbReference type="SUPFAM" id="SSF53335">
    <property type="entry name" value="S-adenosyl-L-methionine-dependent methyltransferases"/>
    <property type="match status" value="1"/>
</dbReference>
<dbReference type="PROSITE" id="PS51608">
    <property type="entry name" value="SAM_MT_UBIE"/>
    <property type="match status" value="1"/>
</dbReference>
<dbReference type="PROSITE" id="PS01183">
    <property type="entry name" value="UBIE_1"/>
    <property type="match status" value="1"/>
</dbReference>
<dbReference type="PROSITE" id="PS01184">
    <property type="entry name" value="UBIE_2"/>
    <property type="match status" value="1"/>
</dbReference>
<comment type="function">
    <text evidence="1">Methyltransferase required for the conversion of demethylmenaquinol (DMKH2) to menaquinol (MKH2).</text>
</comment>
<comment type="catalytic activity">
    <reaction evidence="1">
        <text>a 2-demethylmenaquinol + S-adenosyl-L-methionine = a menaquinol + S-adenosyl-L-homocysteine + H(+)</text>
        <dbReference type="Rhea" id="RHEA:42640"/>
        <dbReference type="Rhea" id="RHEA-COMP:9539"/>
        <dbReference type="Rhea" id="RHEA-COMP:9563"/>
        <dbReference type="ChEBI" id="CHEBI:15378"/>
        <dbReference type="ChEBI" id="CHEBI:18151"/>
        <dbReference type="ChEBI" id="CHEBI:55437"/>
        <dbReference type="ChEBI" id="CHEBI:57856"/>
        <dbReference type="ChEBI" id="CHEBI:59789"/>
        <dbReference type="EC" id="2.1.1.163"/>
    </reaction>
</comment>
<comment type="pathway">
    <text evidence="1">Quinol/quinone metabolism; menaquinone biosynthesis; menaquinol from 1,4-dihydroxy-2-naphthoate: step 2/2.</text>
</comment>
<comment type="similarity">
    <text evidence="1">Belongs to the class I-like SAM-binding methyltransferase superfamily. MenG/UbiE family.</text>
</comment>
<evidence type="ECO:0000255" key="1">
    <source>
        <dbReference type="HAMAP-Rule" id="MF_01813"/>
    </source>
</evidence>
<keyword id="KW-0474">Menaquinone biosynthesis</keyword>
<keyword id="KW-0489">Methyltransferase</keyword>
<keyword id="KW-0949">S-adenosyl-L-methionine</keyword>
<keyword id="KW-0808">Transferase</keyword>
<name>MENG_PARS2</name>
<protein>
    <recommendedName>
        <fullName evidence="1">Demethylmenaquinone methyltransferase</fullName>
        <ecNumber evidence="1">2.1.1.163</ecNumber>
    </recommendedName>
</protein>
<proteinExistence type="inferred from homology"/>